<evidence type="ECO:0000250" key="1">
    <source>
        <dbReference type="UniProtKB" id="P97931"/>
    </source>
</evidence>
<evidence type="ECO:0000255" key="2">
    <source>
        <dbReference type="HAMAP-Rule" id="MF_03166"/>
    </source>
</evidence>
<evidence type="ECO:0000256" key="3">
    <source>
        <dbReference type="SAM" id="MobiDB-lite"/>
    </source>
</evidence>
<evidence type="ECO:0000269" key="4">
    <source>
    </source>
</evidence>
<evidence type="ECO:0000269" key="5">
    <source>
    </source>
</evidence>
<evidence type="ECO:0000269" key="6">
    <source>
    </source>
</evidence>
<evidence type="ECO:0000269" key="7">
    <source>
    </source>
</evidence>
<evidence type="ECO:0000269" key="8">
    <source>
    </source>
</evidence>
<evidence type="ECO:0000269" key="9">
    <source>
    </source>
</evidence>
<evidence type="ECO:0000269" key="10">
    <source>
    </source>
</evidence>
<evidence type="ECO:0000269" key="11">
    <source>
    </source>
</evidence>
<evidence type="ECO:0000269" key="12">
    <source>
    </source>
</evidence>
<evidence type="ECO:0000269" key="13">
    <source>
    </source>
</evidence>
<evidence type="ECO:0000269" key="14">
    <source>
    </source>
</evidence>
<evidence type="ECO:0000269" key="15">
    <source>
    </source>
</evidence>
<evidence type="ECO:0000269" key="16">
    <source>
    </source>
</evidence>
<evidence type="ECO:0000303" key="17">
    <source>
    </source>
</evidence>
<evidence type="ECO:0000303" key="18">
    <source>
    </source>
</evidence>
<evidence type="ECO:0000303" key="19">
    <source>
    </source>
</evidence>
<evidence type="ECO:0000303" key="20">
    <source>
    </source>
</evidence>
<evidence type="ECO:0000312" key="21">
    <source>
        <dbReference type="PDB" id="1SSP"/>
    </source>
</evidence>
<evidence type="ECO:0000312" key="22">
    <source>
        <dbReference type="PDB" id="4SKN"/>
    </source>
</evidence>
<evidence type="ECO:0007744" key="23">
    <source>
    </source>
</evidence>
<evidence type="ECO:0007744" key="24">
    <source>
    </source>
</evidence>
<evidence type="ECO:0007744" key="25">
    <source>
    </source>
</evidence>
<evidence type="ECO:0007744" key="26">
    <source>
    </source>
</evidence>
<evidence type="ECO:0007744" key="27">
    <source>
    </source>
</evidence>
<evidence type="ECO:0007744" key="28">
    <source>
    </source>
</evidence>
<evidence type="ECO:0007829" key="29">
    <source>
        <dbReference type="PDB" id="1DPU"/>
    </source>
</evidence>
<evidence type="ECO:0007829" key="30">
    <source>
        <dbReference type="PDB" id="1EMH"/>
    </source>
</evidence>
<evidence type="ECO:0007829" key="31">
    <source>
        <dbReference type="PDB" id="3FCI"/>
    </source>
</evidence>
<evidence type="ECO:0007829" key="32">
    <source>
        <dbReference type="PDB" id="3FCK"/>
    </source>
</evidence>
<evidence type="ECO:0007829" key="33">
    <source>
        <dbReference type="PDB" id="3TKB"/>
    </source>
</evidence>
<evidence type="ECO:0007829" key="34">
    <source>
        <dbReference type="PDB" id="5AYR"/>
    </source>
</evidence>
<comment type="function">
    <text evidence="1 4 5 6 8 9 12 13 16">Uracil-DNA glycosylase that hydrolyzes the N-glycosidic bond between uracil and deoxyribose in single- and double-stranded DNA (ssDNA and dsDNA) to release a free uracil residue and form an abasic (apurinic/apyrimidinic; AP) site. Excises uracil residues arising as a result of misincorporation of dUMP residues by DNA polymerase during replication or due to spontaneous or enzymatic deamination of cytosine (PubMed:12958596, PubMed:15967827, PubMed:17101234, PubMed:22521144, PubMed:7671300, PubMed:8900285, PubMed:9016624, PubMed:9776759). Mediates error-free base excision repair (BER) of uracil at replication forks. According to the model, it is recruited by PCNA to S-phase replication forks to remove misincorporated uracil at U:A base mispairs in nascent DNA strands. Via trimeric RPA it is recruited to ssDNA stretches ahead of the polymerase to allow detection and excision of deaminated cytosines prior to replication. The resultant AP sites temporarily stall replication, allowing time to repair the lesion (PubMed:22521144). Mediates mutagenic uracil processing involved in antibody affinity maturation. Processes AICDA-induced U:G base mispairs at variable immunoglobulin (Ig) regions leading to the generation of transversion mutations (PubMed:12958596). Operates at switch sites of Ig constant regions where it mediates Ig isotype class switch recombination. Excises AICDA-induced uracil residues forming AP sites that are subsequently nicked by APEX1 endonuclease. The accumulation of staggered nicks in opposite strands results in double strand DNA breaks that are finally resolved via non-homologous end joining repair pathway (By similarity) (PubMed:12958596).</text>
</comment>
<comment type="catalytic activity">
    <reaction evidence="2">
        <text>Hydrolyzes single-stranded DNA or mismatched double-stranded DNA and polynucleotides, releasing free uracil.</text>
        <dbReference type="EC" id="3.2.2.27"/>
    </reaction>
</comment>
<comment type="catalytic activity">
    <reaction evidence="4 5 6 8 9 12 13 16">
        <text>a 2'-deoxyuridine in single-stranded DNA + H2O = a 2'-deoxyribose 5'-monophosphate in single-stranded DNA + uracil</text>
        <dbReference type="Rhea" id="RHEA:81459"/>
        <dbReference type="Rhea" id="RHEA-COMP:12847"/>
        <dbReference type="Rhea" id="RHEA-COMP:19684"/>
        <dbReference type="ChEBI" id="CHEBI:15377"/>
        <dbReference type="ChEBI" id="CHEBI:17568"/>
        <dbReference type="ChEBI" id="CHEBI:133902"/>
        <dbReference type="ChEBI" id="CHEBI:139095"/>
    </reaction>
    <physiologicalReaction direction="left-to-right" evidence="5">
        <dbReference type="Rhea" id="RHEA:81460"/>
    </physiologicalReaction>
</comment>
<comment type="catalytic activity">
    <reaction evidence="5 8 12 16">
        <text>a 2'-deoxyuridine in double-stranded DNA + H2O = a 2'-deoxyribose 5'-monophosphate in double-stranded DNA + uracil</text>
        <dbReference type="Rhea" id="RHEA:81455"/>
        <dbReference type="Rhea" id="RHEA-COMP:14231"/>
        <dbReference type="Rhea" id="RHEA-COMP:17071"/>
        <dbReference type="ChEBI" id="CHEBI:15377"/>
        <dbReference type="ChEBI" id="CHEBI:17568"/>
        <dbReference type="ChEBI" id="CHEBI:133902"/>
        <dbReference type="ChEBI" id="CHEBI:139095"/>
    </reaction>
    <physiologicalReaction direction="left-to-right" evidence="5">
        <dbReference type="Rhea" id="RHEA:81456"/>
    </physiologicalReaction>
</comment>
<comment type="biophysicochemical properties">
    <molecule>Isoform 2</molecule>
    <kinetics>
        <KM evidence="12">0.8 uM for dUMP-carrying ssDNA and dsDNA</KM>
        <Vmax evidence="8">15895.0 nmol/min/mg enzyme for dUMP-carrying ssDNA</Vmax>
        <Vmax evidence="8">2385.0 nmol/min/mg enzyme for dUMP-carrying dsDNA</Vmax>
    </kinetics>
</comment>
<comment type="biophysicochemical properties">
    <molecule>Isoform 1</molecule>
    <kinetics>
        <KM evidence="16">0.5 uM for dUMP-carrying ssDNA</KM>
        <KM evidence="16">1.3 uM for dUMP-carrying dsDNA</KM>
    </kinetics>
</comment>
<comment type="subunit">
    <text evidence="2">Monomer.</text>
</comment>
<comment type="subunit">
    <molecule>Isoform 2</molecule>
    <text evidence="7 8">Interacts with RPA2 subunit of the RPA trimer; this interaction mediates UNG2 recruitment to RPA-coated single-stranded DNA at stalled replication forks. Interacts with PCNA; this interaction mediates UNG2 recruitment to S-phase replication foci (PubMed:22521144). Interacts (via N-terminus) with FAM72A (PubMed:18676834).</text>
</comment>
<comment type="subunit">
    <text evidence="10">(Microbial infection) Interacts with HIV-1 Vpr.</text>
</comment>
<comment type="interaction">
    <interactant intactId="EBI-1025947">
        <id>P13051</id>
    </interactant>
    <interactant intactId="EBI-621404">
        <id>P15927</id>
        <label>RPA2</label>
    </interactant>
    <organismsDiffer>false</organismsDiffer>
    <experiments>6</experiments>
</comment>
<comment type="interaction">
    <interactant intactId="EBI-25834258">
        <id>P13051-2</id>
    </interactant>
    <interactant intactId="EBI-351428">
        <id>P61158</id>
        <label>ACTR3</label>
    </interactant>
    <organismsDiffer>false</organismsDiffer>
    <experiments>3</experiments>
</comment>
<comment type="interaction">
    <interactant intactId="EBI-25834258">
        <id>P13051-2</id>
    </interactant>
    <interactant intactId="EBI-77613">
        <id>P05067</id>
        <label>APP</label>
    </interactant>
    <organismsDiffer>false</organismsDiffer>
    <experiments>3</experiments>
</comment>
<comment type="interaction">
    <interactant intactId="EBI-25834258">
        <id>P13051-2</id>
    </interactant>
    <interactant intactId="EBI-946046">
        <id>P54252</id>
        <label>ATXN3</label>
    </interactant>
    <organismsDiffer>false</organismsDiffer>
    <experiments>3</experiments>
</comment>
<comment type="interaction">
    <interactant intactId="EBI-25834258">
        <id>P13051-2</id>
    </interactant>
    <interactant intactId="EBI-1383687">
        <id>Q9UQM7</id>
        <label>CAMK2A</label>
    </interactant>
    <organismsDiffer>false</organismsDiffer>
    <experiments>3</experiments>
</comment>
<comment type="interaction">
    <interactant intactId="EBI-25834258">
        <id>P13051-2</id>
    </interactant>
    <interactant intactId="EBI-78060">
        <id>Q14790</id>
        <label>CASP8</label>
    </interactant>
    <organismsDiffer>false</organismsDiffer>
    <experiments>3</experiments>
</comment>
<comment type="interaction">
    <interactant intactId="EBI-25834258">
        <id>P13051-2</id>
    </interactant>
    <interactant intactId="EBI-2808214">
        <id>P16671</id>
        <label>CD36</label>
    </interactant>
    <organismsDiffer>false</organismsDiffer>
    <experiments>3</experiments>
</comment>
<comment type="interaction">
    <interactant intactId="EBI-25834258">
        <id>P13051-2</id>
    </interactant>
    <interactant intactId="EBI-357034">
        <id>P25685</id>
        <label>DNAJB1</label>
    </interactant>
    <organismsDiffer>false</organismsDiffer>
    <experiments>3</experiments>
</comment>
<comment type="interaction">
    <interactant intactId="EBI-25834258">
        <id>P13051-2</id>
    </interactant>
    <interactant intactId="EBI-359594">
        <id>Q969H0-2</id>
        <label>FBXW7</label>
    </interactant>
    <organismsDiffer>false</organismsDiffer>
    <experiments>3</experiments>
</comment>
<comment type="interaction">
    <interactant intactId="EBI-25834258">
        <id>P13051-2</id>
    </interactant>
    <interactant intactId="EBI-515315">
        <id>P06241</id>
        <label>FYN</label>
    </interactant>
    <organismsDiffer>false</organismsDiffer>
    <experiments>3</experiments>
</comment>
<comment type="interaction">
    <interactant intactId="EBI-25834258">
        <id>P13051-2</id>
    </interactant>
    <interactant intactId="EBI-73995">
        <id>P27361</id>
        <label>MAPK3</label>
    </interactant>
    <organismsDiffer>false</organismsDiffer>
    <experiments>3</experiments>
</comment>
<comment type="interaction">
    <interactant intactId="EBI-25834258">
        <id>P13051-2</id>
    </interactant>
    <interactant intactId="EBI-712216">
        <id>Q13765</id>
        <label>NACA</label>
    </interactant>
    <organismsDiffer>false</organismsDiffer>
    <experiments>3</experiments>
</comment>
<comment type="interaction">
    <interactant intactId="EBI-25834258">
        <id>P13051-2</id>
    </interactant>
    <interactant intactId="EBI-1053996">
        <id>O14939</id>
        <label>PLD2</label>
    </interactant>
    <organismsDiffer>false</organismsDiffer>
    <experiments>3</experiments>
</comment>
<comment type="interaction">
    <interactant intactId="EBI-25834258">
        <id>P13051-2</id>
    </interactant>
    <interactant intactId="EBI-1383528">
        <id>P17252</id>
        <label>PRKCA</label>
    </interactant>
    <organismsDiffer>false</organismsDiffer>
    <experiments>3</experiments>
</comment>
<comment type="interaction">
    <interactant intactId="EBI-25834258">
        <id>P13051-2</id>
    </interactant>
    <interactant intactId="EBI-356710">
        <id>Q14257</id>
        <label>RCN2</label>
    </interactant>
    <organismsDiffer>false</organismsDiffer>
    <experiments>3</experiments>
</comment>
<comment type="interaction">
    <interactant intactId="EBI-25834258">
        <id>P13051-2</id>
    </interactant>
    <interactant intactId="EBI-1775921">
        <id>P23443</id>
        <label>RPS6KB1</label>
    </interactant>
    <organismsDiffer>false</organismsDiffer>
    <experiments>3</experiments>
</comment>
<comment type="interaction">
    <interactant intactId="EBI-25834258">
        <id>P13051-2</id>
    </interactant>
    <interactant intactId="EBI-458391">
        <id>P04271</id>
        <label>S100B</label>
    </interactant>
    <organismsDiffer>false</organismsDiffer>
    <experiments>3</experiments>
</comment>
<comment type="interaction">
    <interactant intactId="EBI-25834258">
        <id>P13051-2</id>
    </interactant>
    <interactant intactId="EBI-1560194">
        <id>Q15545</id>
        <label>TAF7</label>
    </interactant>
    <organismsDiffer>false</organismsDiffer>
    <experiments>3</experiments>
</comment>
<comment type="interaction">
    <interactant intactId="EBI-25834258">
        <id>P13051-2</id>
    </interactant>
    <interactant intactId="EBI-779581">
        <id>P61812</id>
        <label>TGFB2</label>
    </interactant>
    <organismsDiffer>false</organismsDiffer>
    <experiments>3</experiments>
</comment>
<comment type="subcellular location">
    <molecule>Isoform 1</molecule>
    <subcellularLocation>
        <location evidence="5 6 13 15">Mitochondrion</location>
    </subcellularLocation>
</comment>
<comment type="subcellular location">
    <molecule>Isoform 2</molecule>
    <subcellularLocation>
        <location evidence="5 6 8 13 15">Nucleus</location>
    </subcellularLocation>
    <text evidence="8">Localizes to S-phase replication foci.</text>
</comment>
<comment type="alternative products">
    <event type="alternative splicing"/>
    <isoform>
        <id>P13051-1</id>
        <name>2</name>
        <name evidence="20">UNG2</name>
        <sequence type="displayed"/>
    </isoform>
    <isoform>
        <id>P13051-2</id>
        <name>1</name>
        <name evidence="20">UNG1</name>
        <sequence type="described" ref="VSP_008513"/>
    </isoform>
</comment>
<comment type="induction">
    <molecule>Isoform 2</molecule>
    <text evidence="4">Up-regulated upon B cell activation.</text>
</comment>
<comment type="induction">
    <molecule>Isoform 1</molecule>
    <text evidence="6">Up-regulated in response to oxidative damage.</text>
</comment>
<comment type="PTM">
    <molecule>Isoform 1</molecule>
    <text evidence="16">Processed by mitochondrial serine or cysteine peptidases to yield a mature dominant form that lacks N-terminal 29 amino acid residues and another minor form that lacks N-terminal 77 amino acid residues. The catalytic activity of UNG1 delta29 is not product-inhibited by AP sites.</text>
</comment>
<comment type="disease" evidence="4 5 8">
    <disease id="DI-01812">
        <name>Immunodeficiency with hyper-IgM 5</name>
        <acronym>HIGM5</acronym>
        <description>A rare immunodeficiency syndrome characterized by normal or elevated serum IgM levels with absence of IgG, IgA, and IgE. It results in a profound susceptibility to bacterial infections.</description>
        <dbReference type="MIM" id="608106"/>
    </disease>
    <text>The disease is caused by variants affecting the gene represented in this entry.</text>
</comment>
<comment type="similarity">
    <text evidence="2">Belongs to the uracil-DNA glycosylase (UDG) superfamily. UNG family.</text>
</comment>
<comment type="online information" name="UNGbase">
    <link uri="https://databases.lovd.nl/shared/genes/UNG"/>
    <text>UNG mutation db</text>
</comment>
<sequence>MIGQKTLYSFFSPSPARKRHAPSPEPAVQGTGVAGVPEESGDAAAIPAKKAPAGQEEPGTPPSSPLSAEQLDRIQRNKAAALLRLAARNVPVGFGESWKKHLSGEFGKPYFIKLMGFVAEERKHYTVYPPPHQVFTWTQMCDIKDVKVVILGQDPYHGPNQAHGLCFSVQRPVPPPPSLENIYKELSTDIEDFVHPGHGDLSGWAKQGVLLLNAVLTVRAHQANSHKERGWEQFTDAVVSWLNQNSNGLVFLLWGSYAQKKGSAIDRKRHHVLQTAHPSPLSVYRGFFGCRHFSKTNELLQKSGKKPIDWKEL</sequence>
<proteinExistence type="evidence at protein level"/>
<name>UNG_HUMAN</name>
<reference key="1">
    <citation type="journal article" date="1989" name="EMBO J.">
        <title>Molecular cloning of human uracil-DNA glycosylase, a highly conserved DNA repair enzyme.</title>
        <authorList>
            <person name="Olsen L.C."/>
            <person name="Aasland R."/>
            <person name="Wittwer C.U."/>
            <person name="Krokan H.E."/>
            <person name="Helland D.E."/>
        </authorList>
    </citation>
    <scope>NUCLEOTIDE SEQUENCE [MRNA] (ISOFORM 1)</scope>
    <scope>PROTEIN SEQUENCE OF 87-113</scope>
    <source>
        <tissue>Placenta</tissue>
    </source>
</reference>
<reference key="2">
    <citation type="journal article" date="1994" name="FEBS Lett.">
        <title>Structure of the gene for human uracil-DNA glycosylase and analysis of the promoter function.</title>
        <authorList>
            <person name="Haug T."/>
            <person name="Skorpen F."/>
            <person name="Lund H."/>
            <person name="Krokan H.E."/>
        </authorList>
    </citation>
    <scope>NUCLEOTIDE SEQUENCE [GENOMIC DNA]</scope>
</reference>
<reference key="3">
    <citation type="journal article" date="1997" name="Nucleic Acids Res.">
        <title>Nuclear and mitochondrial uracil-DNA glycosylases are generated by alternative splicing and transcription from different positions in the UNG gene.</title>
        <authorList>
            <person name="Nilsen H."/>
            <person name="Solum K."/>
            <person name="Haug T."/>
            <person name="Krokan H.E."/>
        </authorList>
    </citation>
    <scope>NUCLEOTIDE SEQUENCE [GENOMIC DNA / MRNA] (ISOFORM 2)</scope>
    <scope>ALTERNATIVE SPLICING</scope>
    <scope>FUNCTION</scope>
    <scope>CATALYTIC ACTIVITY</scope>
    <scope>SUBCELLULAR LOCATION (ISOFORMS 1 AND 2)</scope>
</reference>
<reference key="4">
    <citation type="submission" date="2002-07" db="EMBL/GenBank/DDBJ databases">
        <authorList>
            <consortium name="NIEHS SNPs program"/>
        </authorList>
    </citation>
    <scope>NUCLEOTIDE SEQUENCE [GENOMIC DNA]</scope>
</reference>
<reference key="5">
    <citation type="journal article" date="2004" name="Nat. Genet.">
        <title>Complete sequencing and characterization of 21,243 full-length human cDNAs.</title>
        <authorList>
            <person name="Ota T."/>
            <person name="Suzuki Y."/>
            <person name="Nishikawa T."/>
            <person name="Otsuki T."/>
            <person name="Sugiyama T."/>
            <person name="Irie R."/>
            <person name="Wakamatsu A."/>
            <person name="Hayashi K."/>
            <person name="Sato H."/>
            <person name="Nagai K."/>
            <person name="Kimura K."/>
            <person name="Makita H."/>
            <person name="Sekine M."/>
            <person name="Obayashi M."/>
            <person name="Nishi T."/>
            <person name="Shibahara T."/>
            <person name="Tanaka T."/>
            <person name="Ishii S."/>
            <person name="Yamamoto J."/>
            <person name="Saito K."/>
            <person name="Kawai Y."/>
            <person name="Isono Y."/>
            <person name="Nakamura Y."/>
            <person name="Nagahari K."/>
            <person name="Murakami K."/>
            <person name="Yasuda T."/>
            <person name="Iwayanagi T."/>
            <person name="Wagatsuma M."/>
            <person name="Shiratori A."/>
            <person name="Sudo H."/>
            <person name="Hosoiri T."/>
            <person name="Kaku Y."/>
            <person name="Kodaira H."/>
            <person name="Kondo H."/>
            <person name="Sugawara M."/>
            <person name="Takahashi M."/>
            <person name="Kanda K."/>
            <person name="Yokoi T."/>
            <person name="Furuya T."/>
            <person name="Kikkawa E."/>
            <person name="Omura Y."/>
            <person name="Abe K."/>
            <person name="Kamihara K."/>
            <person name="Katsuta N."/>
            <person name="Sato K."/>
            <person name="Tanikawa M."/>
            <person name="Yamazaki M."/>
            <person name="Ninomiya K."/>
            <person name="Ishibashi T."/>
            <person name="Yamashita H."/>
            <person name="Murakawa K."/>
            <person name="Fujimori K."/>
            <person name="Tanai H."/>
            <person name="Kimata M."/>
            <person name="Watanabe M."/>
            <person name="Hiraoka S."/>
            <person name="Chiba Y."/>
            <person name="Ishida S."/>
            <person name="Ono Y."/>
            <person name="Takiguchi S."/>
            <person name="Watanabe S."/>
            <person name="Yosida M."/>
            <person name="Hotuta T."/>
            <person name="Kusano J."/>
            <person name="Kanehori K."/>
            <person name="Takahashi-Fujii A."/>
            <person name="Hara H."/>
            <person name="Tanase T.-O."/>
            <person name="Nomura Y."/>
            <person name="Togiya S."/>
            <person name="Komai F."/>
            <person name="Hara R."/>
            <person name="Takeuchi K."/>
            <person name="Arita M."/>
            <person name="Imose N."/>
            <person name="Musashino K."/>
            <person name="Yuuki H."/>
            <person name="Oshima A."/>
            <person name="Sasaki N."/>
            <person name="Aotsuka S."/>
            <person name="Yoshikawa Y."/>
            <person name="Matsunawa H."/>
            <person name="Ichihara T."/>
            <person name="Shiohata N."/>
            <person name="Sano S."/>
            <person name="Moriya S."/>
            <person name="Momiyama H."/>
            <person name="Satoh N."/>
            <person name="Takami S."/>
            <person name="Terashima Y."/>
            <person name="Suzuki O."/>
            <person name="Nakagawa S."/>
            <person name="Senoh A."/>
            <person name="Mizoguchi H."/>
            <person name="Goto Y."/>
            <person name="Shimizu F."/>
            <person name="Wakebe H."/>
            <person name="Hishigaki H."/>
            <person name="Watanabe T."/>
            <person name="Sugiyama A."/>
            <person name="Takemoto M."/>
            <person name="Kawakami B."/>
            <person name="Yamazaki M."/>
            <person name="Watanabe K."/>
            <person name="Kumagai A."/>
            <person name="Itakura S."/>
            <person name="Fukuzumi Y."/>
            <person name="Fujimori Y."/>
            <person name="Komiyama M."/>
            <person name="Tashiro H."/>
            <person name="Tanigami A."/>
            <person name="Fujiwara T."/>
            <person name="Ono T."/>
            <person name="Yamada K."/>
            <person name="Fujii Y."/>
            <person name="Ozaki K."/>
            <person name="Hirao M."/>
            <person name="Ohmori Y."/>
            <person name="Kawabata A."/>
            <person name="Hikiji T."/>
            <person name="Kobatake N."/>
            <person name="Inagaki H."/>
            <person name="Ikema Y."/>
            <person name="Okamoto S."/>
            <person name="Okitani R."/>
            <person name="Kawakami T."/>
            <person name="Noguchi S."/>
            <person name="Itoh T."/>
            <person name="Shigeta K."/>
            <person name="Senba T."/>
            <person name="Matsumura K."/>
            <person name="Nakajima Y."/>
            <person name="Mizuno T."/>
            <person name="Morinaga M."/>
            <person name="Sasaki M."/>
            <person name="Togashi T."/>
            <person name="Oyama M."/>
            <person name="Hata H."/>
            <person name="Watanabe M."/>
            <person name="Komatsu T."/>
            <person name="Mizushima-Sugano J."/>
            <person name="Satoh T."/>
            <person name="Shirai Y."/>
            <person name="Takahashi Y."/>
            <person name="Nakagawa K."/>
            <person name="Okumura K."/>
            <person name="Nagase T."/>
            <person name="Nomura N."/>
            <person name="Kikuchi H."/>
            <person name="Masuho Y."/>
            <person name="Yamashita R."/>
            <person name="Nakai K."/>
            <person name="Yada T."/>
            <person name="Nakamura Y."/>
            <person name="Ohara O."/>
            <person name="Isogai T."/>
            <person name="Sugano S."/>
        </authorList>
    </citation>
    <scope>NUCLEOTIDE SEQUENCE [LARGE SCALE MRNA] (ISOFORMS 1 AND 2)</scope>
    <source>
        <tissue>Tongue</tissue>
    </source>
</reference>
<reference key="6">
    <citation type="submission" date="2005-07" db="EMBL/GenBank/DDBJ databases">
        <authorList>
            <person name="Mural R.J."/>
            <person name="Istrail S."/>
            <person name="Sutton G.G."/>
            <person name="Florea L."/>
            <person name="Halpern A.L."/>
            <person name="Mobarry C.M."/>
            <person name="Lippert R."/>
            <person name="Walenz B."/>
            <person name="Shatkay H."/>
            <person name="Dew I."/>
            <person name="Miller J.R."/>
            <person name="Flanigan M.J."/>
            <person name="Edwards N.J."/>
            <person name="Bolanos R."/>
            <person name="Fasulo D."/>
            <person name="Halldorsson B.V."/>
            <person name="Hannenhalli S."/>
            <person name="Turner R."/>
            <person name="Yooseph S."/>
            <person name="Lu F."/>
            <person name="Nusskern D.R."/>
            <person name="Shue B.C."/>
            <person name="Zheng X.H."/>
            <person name="Zhong F."/>
            <person name="Delcher A.L."/>
            <person name="Huson D.H."/>
            <person name="Kravitz S.A."/>
            <person name="Mouchard L."/>
            <person name="Reinert K."/>
            <person name="Remington K.A."/>
            <person name="Clark A.G."/>
            <person name="Waterman M.S."/>
            <person name="Eichler E.E."/>
            <person name="Adams M.D."/>
            <person name="Hunkapiller M.W."/>
            <person name="Myers E.W."/>
            <person name="Venter J.C."/>
        </authorList>
    </citation>
    <scope>NUCLEOTIDE SEQUENCE [LARGE SCALE GENOMIC DNA]</scope>
</reference>
<reference key="7">
    <citation type="journal article" date="2004" name="Genome Res.">
        <title>The status, quality, and expansion of the NIH full-length cDNA project: the Mammalian Gene Collection (MGC).</title>
        <authorList>
            <consortium name="The MGC Project Team"/>
        </authorList>
    </citation>
    <scope>NUCLEOTIDE SEQUENCE [LARGE SCALE MRNA] (ISOFORM 1)</scope>
    <source>
        <tissue>Uterus</tissue>
    </source>
</reference>
<reference key="8">
    <citation type="journal article" date="1996" name="EMBO J.">
        <title>Excision of cytosine and thymine from DNA by mutants of human uracil-DNA glycosylase.</title>
        <authorList>
            <person name="Kavli B."/>
            <person name="Slupphaug G."/>
            <person name="Mol C.D."/>
            <person name="Arvai A.S."/>
            <person name="Petersen S.B."/>
            <person name="Tainer J.A."/>
            <person name="Krohan H.E."/>
        </authorList>
    </citation>
    <scope>MUTAGENESIS OF ASP-154; TYR-156 AND ASN-213</scope>
</reference>
<reference key="9">
    <citation type="journal article" date="1996" name="J. Virol.">
        <title>Human immunodeficiency virus type 1 Vpr protein binds to the uracil DNA glycosylase DNA repair enzyme.</title>
        <authorList>
            <person name="Bouhamdan M."/>
            <person name="Benichou S."/>
            <person name="Rey F."/>
            <person name="Navarro J.-M."/>
            <person name="Agostini I."/>
            <person name="Spire B."/>
            <person name="Camonis J."/>
            <person name="Slupphaug G."/>
            <person name="Vigne R."/>
            <person name="Benarous R."/>
            <person name="Sire J."/>
        </authorList>
    </citation>
    <scope>INTERACTION WITH HIV-1 VPR (MICROBIAL INFECTION)</scope>
</reference>
<reference key="10">
    <citation type="journal article" date="1998" name="Nucleic Acids Res.">
        <title>Nuclear and mitochondrial splice forms of human uracil-DNA glycosylase contain a complex nuclear localisation signal and a strong classical mitochondrial localisation signal, respectively.</title>
        <authorList>
            <person name="Otterlei M."/>
            <person name="Haug T."/>
            <person name="Nagelhus T.A."/>
            <person name="Slupphaug G."/>
            <person name="Lindmo T."/>
            <person name="Krokan H.E."/>
        </authorList>
    </citation>
    <scope>SUBCELLULAR LOCATION (ISOFORMS 1 AND 2)</scope>
    <scope>MOTIF (ISOFORM 2)</scope>
    <scope>REGION (ISOFORM 1)</scope>
    <scope>MUTAGENESIS OF LYS-18; ARG-19; LYS-49 AND LYS-50</scope>
    <scope>MUTAGENESIS OF ARG-13; LYS-14; LEU-26; SER-27; ARG-28 AND LEU-29 (ISOFORM 1)</scope>
</reference>
<reference key="11">
    <citation type="journal article" date="1998" name="Nucleic Acids Res.">
        <title>Human mitochondrial uracil-DNA glycosylase preform (UNG1) is processed to two forms one of which is resistant to inhibition by AP sites.</title>
        <authorList>
            <person name="Bharati S."/>
            <person name="Krokan H.E."/>
            <person name="Kristiansen L."/>
            <person name="Otterlei M."/>
            <person name="Slupphaug G."/>
        </authorList>
    </citation>
    <scope>FUNCTION</scope>
    <scope>CATALYTIC ACTIVITY</scope>
    <scope>BIOPHYSICOCHEMICAL PROPERTIES (ISOFORM 1)</scope>
    <scope>PROTEOLYTIC CLEAVAGE (ISOFORM 1)</scope>
    <scope>SITE (ISOFORM 1)</scope>
</reference>
<reference key="12">
    <citation type="journal article" date="2006" name="Cell">
        <title>Global, in vivo, and site-specific phosphorylation dynamics in signaling networks.</title>
        <authorList>
            <person name="Olsen J.V."/>
            <person name="Blagoev B."/>
            <person name="Gnad F."/>
            <person name="Macek B."/>
            <person name="Kumar C."/>
            <person name="Mortensen P."/>
            <person name="Mann M."/>
        </authorList>
    </citation>
    <scope>IDENTIFICATION BY MASS SPECTROMETRY [LARGE SCALE ANALYSIS]</scope>
    <source>
        <tissue>Cervix carcinoma</tissue>
    </source>
</reference>
<reference key="13">
    <citation type="journal article" date="2007" name="Neuroscience">
        <title>Different organization of base excision repair of uracil in DNA in nuclei and mitochondria and selective upregulation of mitochondrial uracil-DNA glycosylase after oxidative stress.</title>
        <authorList>
            <person name="Akbari M."/>
            <person name="Otterlei M."/>
            <person name="Pena-Diaz J."/>
            <person name="Krokan H.E."/>
        </authorList>
    </citation>
    <scope>FUNCTION</scope>
    <scope>CATALYTIC ACTIVITY</scope>
    <scope>INDUCTION (ISOFORM 1)</scope>
    <scope>SUBCELLULAR LOCATION (ISOFORMS 1 AND 2)</scope>
</reference>
<reference key="14">
    <citation type="journal article" date="2008" name="Cancer Res.">
        <title>Ugene, a newly identified protein that is commonly overexpressed in cancer and binds uracil DNA glycosylase.</title>
        <authorList>
            <person name="Guo C."/>
            <person name="Zhang X."/>
            <person name="Fink S.P."/>
            <person name="Platzer P."/>
            <person name="Wilson K."/>
            <person name="Willson J.K."/>
            <person name="Wang Z."/>
            <person name="Markowitz S.D."/>
        </authorList>
    </citation>
    <scope>INTERACTION WITH FAM72A (ISOFORM 2)</scope>
</reference>
<reference key="15">
    <citation type="journal article" date="2008" name="J. Proteome Res.">
        <title>Combining protein-based IMAC, peptide-based IMAC, and MudPIT for efficient phosphoproteomic analysis.</title>
        <authorList>
            <person name="Cantin G.T."/>
            <person name="Yi W."/>
            <person name="Lu B."/>
            <person name="Park S.K."/>
            <person name="Xu T."/>
            <person name="Lee J.-D."/>
            <person name="Yates J.R. III"/>
        </authorList>
    </citation>
    <scope>IDENTIFICATION BY MASS SPECTROMETRY [LARGE SCALE ANALYSIS]</scope>
    <source>
        <tissue>Cervix carcinoma</tissue>
    </source>
</reference>
<reference key="16">
    <citation type="journal article" date="2008" name="Proc. Natl. Acad. Sci. U.S.A.">
        <title>A quantitative atlas of mitotic phosphorylation.</title>
        <authorList>
            <person name="Dephoure N."/>
            <person name="Zhou C."/>
            <person name="Villen J."/>
            <person name="Beausoleil S.A."/>
            <person name="Bakalarski C.E."/>
            <person name="Elledge S.J."/>
            <person name="Gygi S.P."/>
        </authorList>
    </citation>
    <scope>PHOSPHORYLATION [LARGE SCALE ANALYSIS] AT SER-12; SER-14; SER-23; THR-60 AND SER-64</scope>
    <scope>IDENTIFICATION BY MASS SPECTROMETRY [LARGE SCALE ANALYSIS]</scope>
    <source>
        <tissue>Cervix carcinoma</tissue>
    </source>
</reference>
<reference key="17">
    <citation type="journal article" date="2009" name="Anal. Chem.">
        <title>Lys-N and trypsin cover complementary parts of the phosphoproteome in a refined SCX-based approach.</title>
        <authorList>
            <person name="Gauci S."/>
            <person name="Helbig A.O."/>
            <person name="Slijper M."/>
            <person name="Krijgsveld J."/>
            <person name="Heck A.J."/>
            <person name="Mohammed S."/>
        </authorList>
    </citation>
    <scope>IDENTIFICATION BY MASS SPECTROMETRY [LARGE SCALE ANALYSIS]</scope>
</reference>
<reference key="18">
    <citation type="journal article" date="2009" name="Sci. Signal.">
        <title>Quantitative phosphoproteomic analysis of T cell receptor signaling reveals system-wide modulation of protein-protein interactions.</title>
        <authorList>
            <person name="Mayya V."/>
            <person name="Lundgren D.H."/>
            <person name="Hwang S.-I."/>
            <person name="Rezaul K."/>
            <person name="Wu L."/>
            <person name="Eng J.K."/>
            <person name="Rodionov V."/>
            <person name="Han D.K."/>
        </authorList>
    </citation>
    <scope>PHOSPHORYLATION [LARGE SCALE ANALYSIS] AT SER-14; SER-23; THR-60 AND SER-64</scope>
    <scope>IDENTIFICATION BY MASS SPECTROMETRY [LARGE SCALE ANALYSIS]</scope>
    <source>
        <tissue>Leukemic T-cell</tissue>
    </source>
</reference>
<reference key="19">
    <citation type="journal article" date="2009" name="Science">
        <title>Lysine acetylation targets protein complexes and co-regulates major cellular functions.</title>
        <authorList>
            <person name="Choudhary C."/>
            <person name="Kumar C."/>
            <person name="Gnad F."/>
            <person name="Nielsen M.L."/>
            <person name="Rehman M."/>
            <person name="Walther T.C."/>
            <person name="Olsen J.V."/>
            <person name="Mann M."/>
        </authorList>
    </citation>
    <scope>ACETYLATION [LARGE SCALE ANALYSIS] AT LYS-295</scope>
    <scope>IDENTIFICATION BY MASS SPECTROMETRY [LARGE SCALE ANALYSIS]</scope>
</reference>
<reference key="20">
    <citation type="journal article" date="2010" name="Sci. Signal.">
        <title>Quantitative phosphoproteomics reveals widespread full phosphorylation site occupancy during mitosis.</title>
        <authorList>
            <person name="Olsen J.V."/>
            <person name="Vermeulen M."/>
            <person name="Santamaria A."/>
            <person name="Kumar C."/>
            <person name="Miller M.L."/>
            <person name="Jensen L.J."/>
            <person name="Gnad F."/>
            <person name="Cox J."/>
            <person name="Jensen T.S."/>
            <person name="Nigg E.A."/>
            <person name="Brunak S."/>
            <person name="Mann M."/>
        </authorList>
    </citation>
    <scope>PHOSPHORYLATION [LARGE SCALE ANALYSIS] AT SER-12; SER-14; SER-23 AND THR-60</scope>
    <scope>IDENTIFICATION BY MASS SPECTROMETRY [LARGE SCALE ANALYSIS]</scope>
    <source>
        <tissue>Cervix carcinoma</tissue>
    </source>
</reference>
<reference key="21">
    <citation type="journal article" date="2011" name="Sci. Signal.">
        <title>System-wide temporal characterization of the proteome and phosphoproteome of human embryonic stem cell differentiation.</title>
        <authorList>
            <person name="Rigbolt K.T."/>
            <person name="Prokhorova T.A."/>
            <person name="Akimov V."/>
            <person name="Henningsen J."/>
            <person name="Johansen P.T."/>
            <person name="Kratchmarova I."/>
            <person name="Kassem M."/>
            <person name="Mann M."/>
            <person name="Olsen J.V."/>
            <person name="Blagoev B."/>
        </authorList>
    </citation>
    <scope>PHOSPHORYLATION [LARGE SCALE ANALYSIS] AT SER-23 AND THR-60</scope>
    <scope>IDENTIFICATION BY MASS SPECTROMETRY [LARGE SCALE ANALYSIS]</scope>
</reference>
<reference key="22">
    <citation type="journal article" date="2013" name="J. Proteome Res.">
        <title>Toward a comprehensive characterization of a human cancer cell phosphoproteome.</title>
        <authorList>
            <person name="Zhou H."/>
            <person name="Di Palma S."/>
            <person name="Preisinger C."/>
            <person name="Peng M."/>
            <person name="Polat A.N."/>
            <person name="Heck A.J."/>
            <person name="Mohammed S."/>
        </authorList>
    </citation>
    <scope>PHOSPHORYLATION [LARGE SCALE ANALYSIS] AT SER-12; SER-14; SER-23; THR-60 AND SER-64</scope>
    <scope>IDENTIFICATION BY MASS SPECTROMETRY [LARGE SCALE ANALYSIS]</scope>
    <source>
        <tissue>Cervix carcinoma</tissue>
        <tissue>Erythroleukemia</tissue>
    </source>
</reference>
<reference key="23">
    <citation type="journal article" date="1995" name="Cell">
        <title>Crystal structure and mutational analysis of human uracil-DNA glycosylase: structural basis for specificity and catalysis.</title>
        <authorList>
            <person name="Mol C.D."/>
            <person name="Arvai A.S."/>
            <person name="Slupphaug G."/>
            <person name="Kavli B."/>
            <person name="Alseth I."/>
            <person name="Krohan H.E."/>
            <person name="Tainer J.A."/>
        </authorList>
    </citation>
    <scope>X-RAY CRYSTALLOGRAPHY (2.0 ANGSTROMS)</scope>
</reference>
<reference key="24">
    <citation type="journal article" date="1995" name="Cell">
        <title>Crystal structure of human uracil-DNA glycosylase in complex with a protein inhibitor: protein mimicry of DNA.</title>
        <authorList>
            <person name="Mol C.D."/>
            <person name="Arvai A.S."/>
            <person name="Sanderson R.J."/>
            <person name="Slupphaug G."/>
            <person name="Kavli B."/>
            <person name="Krokan H.E."/>
            <person name="Mosbaugh D.W."/>
            <person name="Tainer J.A."/>
        </authorList>
    </citation>
    <scope>X-RAY CRYSTALLOGRAPHY (1.9 ANGSTROMS) IN COMPLEX WITH URACIL</scope>
    <scope>ACTIVE SITE</scope>
    <scope>FUNCTION</scope>
    <scope>CATALYTIC ACTIVITY</scope>
    <scope>MUTAGENESIS OF LEU-281</scope>
</reference>
<reference key="25">
    <citation type="journal article" date="1996" name="Nature">
        <title>A nucleotide-flipping mechanism from the structure of human uracil-DNA glycosylase bound to DNA.</title>
        <authorList>
            <person name="Slupphaug G."/>
            <person name="Mol C.D."/>
            <person name="Kavli B."/>
            <person name="Arvai A.S."/>
            <person name="Krohan H.E."/>
            <person name="Tainer J.A."/>
        </authorList>
    </citation>
    <scope>X-RAY CRYSTALLOGRAPHY (2.9 ANGSTROMS) IN COMPLEX WITH URACIL AND A 2'-DEOXYRIBOSE 5'-MONOPHOSPHATE IN DOUBLE-STRANDED DNA</scope>
    <scope>FUNCTION</scope>
    <scope>CATALYTIC ACTIVITY</scope>
    <scope>BIOPHYSICOCHEMICAL PROPERTIES (ISOFORM 2)</scope>
    <scope>MUTAGENESIS OF ASP-154 AND LEU-281</scope>
</reference>
<reference key="26">
    <citation type="journal article" date="1998" name="EMBO J.">
        <title>Base excision repair initiation revealed by crystal structures and binding kinetics of human uracil-DNA glycosylase with DNA.</title>
        <authorList>
            <person name="Parikh S.S."/>
            <person name="Mol C.D."/>
            <person name="Slupphaug G."/>
            <person name="Bharati S."/>
            <person name="Krokan H.E."/>
            <person name="Tainer J.A."/>
        </authorList>
    </citation>
    <scope>X-RAY CRYSTALLOGRAPHY (1.9 ANGSTROMS) OF 94-313</scope>
</reference>
<reference key="27">
    <citation type="journal article" date="2003" name="Nat. Immunol.">
        <title>Human uracil-DNA glycosylase deficiency associated with profoundly impaired immunoglobulin class-switch recombination.</title>
        <authorList>
            <person name="Imai K."/>
            <person name="Slupphaug G."/>
            <person name="Lee W.-I."/>
            <person name="Revy P."/>
            <person name="Nonoyama S."/>
            <person name="Catalan N."/>
            <person name="Yel L."/>
            <person name="Forveille M."/>
            <person name="Kavli B."/>
            <person name="Krokan H.E."/>
            <person name="Ochs H.D."/>
            <person name="Fischer A."/>
            <person name="Durandy A."/>
        </authorList>
    </citation>
    <scope>VARIANT HIGM5 SER-251</scope>
    <scope>FUNCTION</scope>
    <scope>INDUCTION (ISOFORM 2)</scope>
</reference>
<reference key="28">
    <citation type="journal article" date="2005" name="J. Exp. Med.">
        <title>B cells from hyper-IgM patients carrying UNG mutations lack ability to remove uracil from ssDNA and have elevated genomic uracil.</title>
        <authorList>
            <person name="Kavli B."/>
            <person name="Andersen S."/>
            <person name="Otterlei M."/>
            <person name="Liabakk N.B."/>
            <person name="Imai K."/>
            <person name="Fischer A."/>
            <person name="Durandy A."/>
            <person name="Krokan H.E."/>
            <person name="Slupphaug G."/>
        </authorList>
    </citation>
    <scope>CHARACTERIZATION OF VARIANT HIGM5 SER-251</scope>
    <scope>FUNCTION</scope>
    <scope>CATALYTIC ACTIVITY</scope>
    <scope>SUBCELLULAR LOCATION (ISOFORMS 1 AND 2)</scope>
</reference>
<reference key="29">
    <citation type="journal article" date="2012" name="DNA Repair">
        <title>The UNG2 Arg88Cys variant abrogates RPA-mediated recruitment of UNG2 to single-stranded DNA.</title>
        <authorList>
            <person name="Torseth K."/>
            <person name="Doseth B."/>
            <person name="Hagen L."/>
            <person name="Olaisen C."/>
            <person name="Liabakk N.B."/>
            <person name="Graesmann H."/>
            <person name="Durandy A."/>
            <person name="Otterlei M."/>
            <person name="Krokan H.E."/>
            <person name="Kavli B."/>
            <person name="Slupphaug G."/>
        </authorList>
    </citation>
    <scope>CHARACTERIZATION OF VARIANT HIGM5 CYS-88</scope>
    <scope>FUNCTION</scope>
    <scope>CATALYTIC ACTIVITY</scope>
    <scope>BIOPHYSICOCHEMICAL PROPERTIES (ISOFORM 2)</scope>
    <scope>INTERACTION WITH RPA2 AND PCNA (ISOFORM 2)</scope>
    <scope>REGION</scope>
    <scope>MUTAGENESIS OF PHE-10; PHE-11; ARG-73; ARG-76; ASN-77; LYS-78; ARG-84 AND ARG-88</scope>
</reference>
<dbReference type="EC" id="3.2.2.27" evidence="2"/>
<dbReference type="EMBL" id="X15653">
    <property type="protein sequence ID" value="CAA33679.1"/>
    <property type="molecule type" value="mRNA"/>
</dbReference>
<dbReference type="EMBL" id="X89398">
    <property type="protein sequence ID" value="CAA61578.1"/>
    <property type="molecule type" value="Genomic_DNA"/>
</dbReference>
<dbReference type="EMBL" id="X89398">
    <property type="protein sequence ID" value="CAA61579.1"/>
    <property type="molecule type" value="Genomic_DNA"/>
</dbReference>
<dbReference type="EMBL" id="Y09008">
    <property type="protein sequence ID" value="CAA70211.1"/>
    <property type="molecule type" value="mRNA"/>
</dbReference>
<dbReference type="EMBL" id="AF526277">
    <property type="protein sequence ID" value="AAM77695.1"/>
    <property type="molecule type" value="Genomic_DNA"/>
</dbReference>
<dbReference type="EMBL" id="AK291341">
    <property type="protein sequence ID" value="BAF84030.1"/>
    <property type="molecule type" value="mRNA"/>
</dbReference>
<dbReference type="EMBL" id="AK313552">
    <property type="protein sequence ID" value="BAG36328.1"/>
    <property type="molecule type" value="mRNA"/>
</dbReference>
<dbReference type="EMBL" id="CH471054">
    <property type="protein sequence ID" value="EAW97846.1"/>
    <property type="molecule type" value="Genomic_DNA"/>
</dbReference>
<dbReference type="EMBL" id="CH471054">
    <property type="protein sequence ID" value="EAW97847.1"/>
    <property type="molecule type" value="Genomic_DNA"/>
</dbReference>
<dbReference type="EMBL" id="BC015205">
    <property type="protein sequence ID" value="AAH15205.1"/>
    <property type="molecule type" value="mRNA"/>
</dbReference>
<dbReference type="EMBL" id="BC050634">
    <property type="protein sequence ID" value="AAH50634.1"/>
    <property type="molecule type" value="mRNA"/>
</dbReference>
<dbReference type="CCDS" id="CCDS9124.1">
    <molecule id="P13051-1"/>
</dbReference>
<dbReference type="CCDS" id="CCDS9125.1">
    <molecule id="P13051-2"/>
</dbReference>
<dbReference type="PIR" id="S05964">
    <property type="entry name" value="A60472"/>
</dbReference>
<dbReference type="RefSeq" id="NP_003353.1">
    <molecule id="P13051-2"/>
    <property type="nucleotide sequence ID" value="NM_003362.4"/>
</dbReference>
<dbReference type="RefSeq" id="NP_550433.1">
    <molecule id="P13051-1"/>
    <property type="nucleotide sequence ID" value="NM_080911.3"/>
</dbReference>
<dbReference type="PDB" id="1AKZ">
    <property type="method" value="X-ray"/>
    <property type="resolution" value="1.57 A"/>
    <property type="chains" value="A=94-313"/>
</dbReference>
<dbReference type="PDB" id="1DPU">
    <property type="method" value="NMR"/>
    <property type="chains" value="B=73-88"/>
</dbReference>
<dbReference type="PDB" id="1EMH">
    <property type="method" value="X-ray"/>
    <property type="resolution" value="1.80 A"/>
    <property type="chains" value="A=94-313"/>
</dbReference>
<dbReference type="PDB" id="1EMJ">
    <property type="method" value="X-ray"/>
    <property type="resolution" value="2.00 A"/>
    <property type="chains" value="A=94-313"/>
</dbReference>
<dbReference type="PDB" id="1Q3F">
    <property type="method" value="X-ray"/>
    <property type="resolution" value="1.90 A"/>
    <property type="chains" value="A=94-313"/>
</dbReference>
<dbReference type="PDB" id="1SSP">
    <property type="method" value="X-ray"/>
    <property type="resolution" value="1.90 A"/>
    <property type="chains" value="E=94-313"/>
</dbReference>
<dbReference type="PDB" id="1UGH">
    <property type="method" value="X-ray"/>
    <property type="resolution" value="1.90 A"/>
    <property type="chains" value="E=94-313"/>
</dbReference>
<dbReference type="PDB" id="1YUO">
    <property type="method" value="X-ray"/>
    <property type="resolution" value="1.95 A"/>
    <property type="chains" value="A=91-313"/>
</dbReference>
<dbReference type="PDB" id="2HXM">
    <property type="method" value="X-ray"/>
    <property type="resolution" value="1.30 A"/>
    <property type="chains" value="A=94-313"/>
</dbReference>
<dbReference type="PDB" id="2OXM">
    <property type="method" value="X-ray"/>
    <property type="resolution" value="2.50 A"/>
    <property type="chains" value="A=94-313"/>
</dbReference>
<dbReference type="PDB" id="2OYT">
    <property type="method" value="X-ray"/>
    <property type="resolution" value="2.00 A"/>
    <property type="chains" value="A=94-313"/>
</dbReference>
<dbReference type="PDB" id="2SSP">
    <property type="method" value="X-ray"/>
    <property type="resolution" value="2.25 A"/>
    <property type="chains" value="E=94-313"/>
</dbReference>
<dbReference type="PDB" id="3FCF">
    <property type="method" value="X-ray"/>
    <property type="resolution" value="1.84 A"/>
    <property type="chains" value="A=94-313"/>
</dbReference>
<dbReference type="PDB" id="3FCI">
    <property type="method" value="X-ray"/>
    <property type="resolution" value="1.27 A"/>
    <property type="chains" value="A=94-313"/>
</dbReference>
<dbReference type="PDB" id="3FCK">
    <property type="method" value="X-ray"/>
    <property type="resolution" value="1.64 A"/>
    <property type="chains" value="B=94-313"/>
</dbReference>
<dbReference type="PDB" id="3FCL">
    <property type="method" value="X-ray"/>
    <property type="resolution" value="1.70 A"/>
    <property type="chains" value="A/B=94-313"/>
</dbReference>
<dbReference type="PDB" id="3TKB">
    <property type="method" value="X-ray"/>
    <property type="resolution" value="1.50 A"/>
    <property type="chains" value="A=94-313"/>
</dbReference>
<dbReference type="PDB" id="4SKN">
    <property type="method" value="X-ray"/>
    <property type="resolution" value="2.90 A"/>
    <property type="chains" value="E=94-313"/>
</dbReference>
<dbReference type="PDB" id="5AYR">
    <property type="method" value="X-ray"/>
    <property type="resolution" value="2.40 A"/>
    <property type="chains" value="A/C=94-313"/>
</dbReference>
<dbReference type="PDB" id="5JK7">
    <property type="method" value="X-ray"/>
    <property type="resolution" value="3.49 A"/>
    <property type="chains" value="D/G=94-313"/>
</dbReference>
<dbReference type="PDB" id="6VBA">
    <property type="method" value="X-ray"/>
    <property type="resolution" value="1.80 A"/>
    <property type="chains" value="A=94-313"/>
</dbReference>
<dbReference type="PDB" id="7V7C">
    <property type="method" value="EM"/>
    <property type="resolution" value="3.70 A"/>
    <property type="chains" value="D/H=94-313"/>
</dbReference>
<dbReference type="PDBsum" id="1AKZ"/>
<dbReference type="PDBsum" id="1DPU"/>
<dbReference type="PDBsum" id="1EMH"/>
<dbReference type="PDBsum" id="1EMJ"/>
<dbReference type="PDBsum" id="1Q3F"/>
<dbReference type="PDBsum" id="1SSP"/>
<dbReference type="PDBsum" id="1UGH"/>
<dbReference type="PDBsum" id="1YUO"/>
<dbReference type="PDBsum" id="2HXM"/>
<dbReference type="PDBsum" id="2OXM"/>
<dbReference type="PDBsum" id="2OYT"/>
<dbReference type="PDBsum" id="2SSP"/>
<dbReference type="PDBsum" id="3FCF"/>
<dbReference type="PDBsum" id="3FCI"/>
<dbReference type="PDBsum" id="3FCK"/>
<dbReference type="PDBsum" id="3FCL"/>
<dbReference type="PDBsum" id="3TKB"/>
<dbReference type="PDBsum" id="4SKN"/>
<dbReference type="PDBsum" id="5AYR"/>
<dbReference type="PDBsum" id="5JK7"/>
<dbReference type="PDBsum" id="6VBA"/>
<dbReference type="PDBsum" id="7V7C"/>
<dbReference type="EMDB" id="EMD-31766"/>
<dbReference type="SMR" id="P13051"/>
<dbReference type="BioGRID" id="113220">
    <property type="interactions" value="48"/>
</dbReference>
<dbReference type="DIP" id="DIP-24194N"/>
<dbReference type="ELM" id="P13051"/>
<dbReference type="FunCoup" id="P13051">
    <property type="interactions" value="1642"/>
</dbReference>
<dbReference type="IntAct" id="P13051">
    <property type="interactions" value="36"/>
</dbReference>
<dbReference type="MINT" id="P13051"/>
<dbReference type="STRING" id="9606.ENSP00000242576"/>
<dbReference type="BindingDB" id="P13051"/>
<dbReference type="ChEMBL" id="CHEMBL3277"/>
<dbReference type="DrugBank" id="DB07116">
    <property type="generic name" value="1-(2-DEOXY-5-O-PHOSPHONO-BETA-D-ERYTHRO-PENTOFURANOSYL)-4-METHYL-1H-INDOLE"/>
</dbReference>
<dbReference type="DrugBank" id="DB07760">
    <property type="generic name" value="3-[(1E,7E)-8-(2,6-dioxo-1,2,3,6-tetrahydropyrimidin-4-yl)-3,6-dioxa-2,7-diazaocta-1,7-dien-1-yl]benzoic acid"/>
</dbReference>
<dbReference type="DrugBank" id="DB06990">
    <property type="generic name" value="4-[(1E,7E)-8-(2,6-DIOXO-1,2,3,6-TETRAHYDROPYRIMIDIN-4-YL)-3,6-DIOXA-2,7-DIAZAOCTA-1,7-DIEN-1-YL]BENZOIC ACID"/>
</dbReference>
<dbReference type="iPTMnet" id="P13051"/>
<dbReference type="PhosphoSitePlus" id="P13051"/>
<dbReference type="SwissPalm" id="P13051"/>
<dbReference type="BioMuta" id="UNG"/>
<dbReference type="DMDM" id="37999897"/>
<dbReference type="jPOST" id="P13051"/>
<dbReference type="MassIVE" id="P13051"/>
<dbReference type="PaxDb" id="9606-ENSP00000242576"/>
<dbReference type="PeptideAtlas" id="P13051"/>
<dbReference type="ProteomicsDB" id="52891">
    <molecule id="P13051-1"/>
</dbReference>
<dbReference type="ProteomicsDB" id="52892">
    <molecule id="P13051-2"/>
</dbReference>
<dbReference type="Pumba" id="P13051"/>
<dbReference type="Antibodypedia" id="3173">
    <property type="antibodies" value="564 antibodies from 36 providers"/>
</dbReference>
<dbReference type="DNASU" id="7374"/>
<dbReference type="Ensembl" id="ENST00000242576.7">
    <molecule id="P13051-1"/>
    <property type="protein sequence ID" value="ENSP00000242576.3"/>
    <property type="gene ID" value="ENSG00000076248.12"/>
</dbReference>
<dbReference type="Ensembl" id="ENST00000336865.6">
    <molecule id="P13051-2"/>
    <property type="protein sequence ID" value="ENSP00000337398.2"/>
    <property type="gene ID" value="ENSG00000076248.12"/>
</dbReference>
<dbReference type="GeneID" id="7374"/>
<dbReference type="KEGG" id="hsa:7374"/>
<dbReference type="MANE-Select" id="ENST00000242576.7">
    <property type="protein sequence ID" value="ENSP00000242576.3"/>
    <property type="RefSeq nucleotide sequence ID" value="NM_080911.3"/>
    <property type="RefSeq protein sequence ID" value="NP_550433.1"/>
</dbReference>
<dbReference type="UCSC" id="uc001tnz.3">
    <molecule id="P13051-1"/>
    <property type="organism name" value="human"/>
</dbReference>
<dbReference type="AGR" id="HGNC:12572"/>
<dbReference type="CTD" id="7374"/>
<dbReference type="DisGeNET" id="7374"/>
<dbReference type="GeneCards" id="UNG"/>
<dbReference type="HGNC" id="HGNC:12572">
    <property type="gene designation" value="UNG"/>
</dbReference>
<dbReference type="HPA" id="ENSG00000076248">
    <property type="expression patterns" value="Low tissue specificity"/>
</dbReference>
<dbReference type="MalaCards" id="UNG"/>
<dbReference type="MIM" id="191525">
    <property type="type" value="gene"/>
</dbReference>
<dbReference type="MIM" id="608106">
    <property type="type" value="phenotype"/>
</dbReference>
<dbReference type="neXtProt" id="NX_P13051"/>
<dbReference type="OpenTargets" id="ENSG00000076248"/>
<dbReference type="Orphanet" id="101092">
    <property type="disease" value="Hyper-IgM syndrome type 5"/>
</dbReference>
<dbReference type="PharmGKB" id="PA364"/>
<dbReference type="VEuPathDB" id="HostDB:ENSG00000076248"/>
<dbReference type="eggNOG" id="KOG2994">
    <property type="taxonomic scope" value="Eukaryota"/>
</dbReference>
<dbReference type="GeneTree" id="ENSGT00390000003405"/>
<dbReference type="HOGENOM" id="CLU_032162_2_1_1"/>
<dbReference type="InParanoid" id="P13051"/>
<dbReference type="OMA" id="PDNGYLM"/>
<dbReference type="OrthoDB" id="10031947at2759"/>
<dbReference type="PAN-GO" id="P13051">
    <property type="GO annotations" value="4 GO annotations based on evolutionary models"/>
</dbReference>
<dbReference type="PhylomeDB" id="P13051"/>
<dbReference type="TreeFam" id="TF315028"/>
<dbReference type="BRENDA" id="3.2.2.27">
    <property type="organism ID" value="2681"/>
</dbReference>
<dbReference type="PathwayCommons" id="P13051"/>
<dbReference type="Reactome" id="R-HSA-110328">
    <molecule id="P13051-1"/>
    <property type="pathway name" value="Recognition and association of DNA glycosylase with site containing an affected pyrimidine"/>
</dbReference>
<dbReference type="Reactome" id="R-HSA-110329">
    <molecule id="P13051-1"/>
    <property type="pathway name" value="Cleavage of the damaged pyrimidine"/>
</dbReference>
<dbReference type="Reactome" id="R-HSA-110357">
    <molecule id="P13051-1"/>
    <property type="pathway name" value="Displacement of DNA glycosylase by APEX1"/>
</dbReference>
<dbReference type="Reactome" id="R-HSA-9821002">
    <property type="pathway name" value="Chromatin modifications during the maternal to zygotic transition (MZT)"/>
</dbReference>
<dbReference type="SABIO-RK" id="P13051"/>
<dbReference type="SignaLink" id="P13051"/>
<dbReference type="SIGNOR" id="P13051"/>
<dbReference type="BioGRID-ORCS" id="7374">
    <property type="hits" value="16 hits in 1162 CRISPR screens"/>
</dbReference>
<dbReference type="ChiTaRS" id="UNG">
    <property type="organism name" value="human"/>
</dbReference>
<dbReference type="EvolutionaryTrace" id="P13051"/>
<dbReference type="GeneWiki" id="Uracil-DNA_glycosylase"/>
<dbReference type="GenomeRNAi" id="7374"/>
<dbReference type="Pharos" id="P13051">
    <property type="development level" value="Tbio"/>
</dbReference>
<dbReference type="PRO" id="PR:P13051"/>
<dbReference type="Proteomes" id="UP000005640">
    <property type="component" value="Chromosome 12"/>
</dbReference>
<dbReference type="RNAct" id="P13051">
    <property type="molecule type" value="protein"/>
</dbReference>
<dbReference type="Bgee" id="ENSG00000076248">
    <property type="expression patterns" value="Expressed in secondary oocyte and 211 other cell types or tissues"/>
</dbReference>
<dbReference type="ExpressionAtlas" id="P13051">
    <property type="expression patterns" value="baseline and differential"/>
</dbReference>
<dbReference type="GO" id="GO:0005739">
    <property type="term" value="C:mitochondrion"/>
    <property type="evidence" value="ECO:0000314"/>
    <property type="project" value="HPA"/>
</dbReference>
<dbReference type="GO" id="GO:0005654">
    <property type="term" value="C:nucleoplasm"/>
    <property type="evidence" value="ECO:0000314"/>
    <property type="project" value="HGNC"/>
</dbReference>
<dbReference type="GO" id="GO:0005634">
    <property type="term" value="C:nucleus"/>
    <property type="evidence" value="ECO:0000318"/>
    <property type="project" value="GO_Central"/>
</dbReference>
<dbReference type="GO" id="GO:0003684">
    <property type="term" value="F:damaged DNA binding"/>
    <property type="evidence" value="ECO:0000314"/>
    <property type="project" value="UniProtKB"/>
</dbReference>
<dbReference type="GO" id="GO:0043024">
    <property type="term" value="F:ribosomal small subunit binding"/>
    <property type="evidence" value="ECO:0000353"/>
    <property type="project" value="UniProtKB"/>
</dbReference>
<dbReference type="GO" id="GO:0004844">
    <property type="term" value="F:uracil DNA N-glycosylase activity"/>
    <property type="evidence" value="ECO:0000314"/>
    <property type="project" value="HGNC"/>
</dbReference>
<dbReference type="GO" id="GO:0006284">
    <property type="term" value="P:base-excision repair"/>
    <property type="evidence" value="ECO:0000314"/>
    <property type="project" value="HGNC"/>
</dbReference>
<dbReference type="GO" id="GO:0097510">
    <property type="term" value="P:base-excision repair, AP site formation via deaminated base removal"/>
    <property type="evidence" value="ECO:0000314"/>
    <property type="project" value="UniProtKB"/>
</dbReference>
<dbReference type="GO" id="GO:0045008">
    <property type="term" value="P:depyrimidination"/>
    <property type="evidence" value="ECO:0000304"/>
    <property type="project" value="Reactome"/>
</dbReference>
<dbReference type="GO" id="GO:0045190">
    <property type="term" value="P:isotype switching"/>
    <property type="evidence" value="ECO:0007669"/>
    <property type="project" value="Ensembl"/>
</dbReference>
<dbReference type="GO" id="GO:0043066">
    <property type="term" value="P:negative regulation of apoptotic process"/>
    <property type="evidence" value="ECO:0007669"/>
    <property type="project" value="Ensembl"/>
</dbReference>
<dbReference type="GO" id="GO:0000012">
    <property type="term" value="P:single strand break repair"/>
    <property type="evidence" value="ECO:0000304"/>
    <property type="project" value="ARUK-UCL"/>
</dbReference>
<dbReference type="GO" id="GO:0016446">
    <property type="term" value="P:somatic hypermutation of immunoglobulin genes"/>
    <property type="evidence" value="ECO:0007669"/>
    <property type="project" value="Ensembl"/>
</dbReference>
<dbReference type="CDD" id="cd10027">
    <property type="entry name" value="UDG-F1-like"/>
    <property type="match status" value="1"/>
</dbReference>
<dbReference type="FunFam" id="3.40.470.10:FF:000004">
    <property type="entry name" value="Uracil-DNA glycosylase"/>
    <property type="match status" value="1"/>
</dbReference>
<dbReference type="Gene3D" id="3.40.470.10">
    <property type="entry name" value="Uracil-DNA glycosylase-like domain"/>
    <property type="match status" value="1"/>
</dbReference>
<dbReference type="HAMAP" id="MF_00148">
    <property type="entry name" value="UDG"/>
    <property type="match status" value="1"/>
</dbReference>
<dbReference type="InterPro" id="IPR002043">
    <property type="entry name" value="UDG_fam1"/>
</dbReference>
<dbReference type="InterPro" id="IPR018085">
    <property type="entry name" value="Ura-DNA_Glyclase_AS"/>
</dbReference>
<dbReference type="InterPro" id="IPR005122">
    <property type="entry name" value="Uracil-DNA_glycosylase-like"/>
</dbReference>
<dbReference type="InterPro" id="IPR036895">
    <property type="entry name" value="Uracil-DNA_glycosylase-like_sf"/>
</dbReference>
<dbReference type="NCBIfam" id="NF003588">
    <property type="entry name" value="PRK05254.1-1"/>
    <property type="match status" value="1"/>
</dbReference>
<dbReference type="NCBIfam" id="NF003589">
    <property type="entry name" value="PRK05254.1-2"/>
    <property type="match status" value="1"/>
</dbReference>
<dbReference type="NCBIfam" id="NF003591">
    <property type="entry name" value="PRK05254.1-4"/>
    <property type="match status" value="1"/>
</dbReference>
<dbReference type="NCBIfam" id="NF003592">
    <property type="entry name" value="PRK05254.1-5"/>
    <property type="match status" value="1"/>
</dbReference>
<dbReference type="NCBIfam" id="TIGR00628">
    <property type="entry name" value="ung"/>
    <property type="match status" value="1"/>
</dbReference>
<dbReference type="PANTHER" id="PTHR11264">
    <property type="entry name" value="URACIL-DNA GLYCOSYLASE"/>
    <property type="match status" value="1"/>
</dbReference>
<dbReference type="PANTHER" id="PTHR11264:SF0">
    <property type="entry name" value="URACIL-DNA GLYCOSYLASE"/>
    <property type="match status" value="1"/>
</dbReference>
<dbReference type="Pfam" id="PF03167">
    <property type="entry name" value="UDG"/>
    <property type="match status" value="1"/>
</dbReference>
<dbReference type="SMART" id="SM00986">
    <property type="entry name" value="UDG"/>
    <property type="match status" value="1"/>
</dbReference>
<dbReference type="SMART" id="SM00987">
    <property type="entry name" value="UreE_C"/>
    <property type="match status" value="1"/>
</dbReference>
<dbReference type="SUPFAM" id="SSF52141">
    <property type="entry name" value="Uracil-DNA glycosylase-like"/>
    <property type="match status" value="1"/>
</dbReference>
<dbReference type="PROSITE" id="PS00130">
    <property type="entry name" value="U_DNA_GLYCOSYLASE"/>
    <property type="match status" value="1"/>
</dbReference>
<accession>P13051</accession>
<accession>A8K5M6</accession>
<accession>B2R8Y1</accession>
<accession>O00637</accession>
<accession>O00719</accession>
<accession>Q93028</accession>
<protein>
    <recommendedName>
        <fullName evidence="2">Uracil-DNA glycosylase</fullName>
        <shortName evidence="2">UDG</shortName>
        <ecNumber evidence="2">3.2.2.27</ecNumber>
    </recommendedName>
</protein>
<keyword id="KW-0002">3D-structure</keyword>
<keyword id="KW-0007">Acetylation</keyword>
<keyword id="KW-0025">Alternative splicing</keyword>
<keyword id="KW-0903">Direct protein sequencing</keyword>
<keyword id="KW-0225">Disease variant</keyword>
<keyword id="KW-0227">DNA damage</keyword>
<keyword id="KW-0234">DNA repair</keyword>
<keyword id="KW-0945">Host-virus interaction</keyword>
<keyword id="KW-0378">Hydrolase</keyword>
<keyword id="KW-0496">Mitochondrion</keyword>
<keyword id="KW-0539">Nucleus</keyword>
<keyword id="KW-0597">Phosphoprotein</keyword>
<keyword id="KW-1267">Proteomics identification</keyword>
<keyword id="KW-1185">Reference proteome</keyword>
<feature type="chain" id="PRO_0000176173" description="Uracil-DNA glycosylase">
    <location>
        <begin position="1"/>
        <end position="313"/>
    </location>
</feature>
<feature type="region of interest" description="Disordered" evidence="3">
    <location>
        <begin position="1"/>
        <end position="68"/>
    </location>
</feature>
<feature type="region of interest" description="Interaction with FAM72A" evidence="7">
    <location>
        <begin position="1"/>
        <end position="25"/>
    </location>
</feature>
<feature type="region of interest" description="Interaction with RPA2" evidence="8">
    <location>
        <begin position="73"/>
        <end position="88"/>
    </location>
</feature>
<feature type="short sequence motif" description="Important for nuclear sorting" evidence="15">
    <location>
        <begin position="17"/>
        <end position="19"/>
    </location>
</feature>
<feature type="compositionally biased region" description="Polar residues" evidence="3">
    <location>
        <begin position="1"/>
        <end position="12"/>
    </location>
</feature>
<feature type="compositionally biased region" description="Low complexity" evidence="3">
    <location>
        <begin position="43"/>
        <end position="53"/>
    </location>
</feature>
<feature type="active site" description="Proton acceptor" evidence="2 14 21">
    <location>
        <position position="154"/>
    </location>
</feature>
<feature type="binding site" evidence="12 14 21 22">
    <location>
        <position position="153"/>
    </location>
    <ligand>
        <name>uracil</name>
        <dbReference type="ChEBI" id="CHEBI:17568"/>
    </ligand>
</feature>
<feature type="binding site" evidence="12 22">
    <location>
        <position position="157"/>
    </location>
    <ligand>
        <name>dsDNA</name>
        <dbReference type="ChEBI" id="CHEBI:4705"/>
    </ligand>
    <ligandPart>
        <name>a 2'-deoxyribose 5'-monophosphate residue</name>
        <dbReference type="ChEBI" id="CHEBI:139095"/>
    </ligandPart>
</feature>
<feature type="binding site" evidence="12 14 21 22">
    <location>
        <position position="167"/>
    </location>
    <ligand>
        <name>uracil</name>
        <dbReference type="ChEBI" id="CHEBI:17568"/>
    </ligand>
</feature>
<feature type="binding site" evidence="12 22">
    <location>
        <position position="178"/>
    </location>
    <ligand>
        <name>dsDNA</name>
        <dbReference type="ChEBI" id="CHEBI:4705"/>
    </ligand>
    <ligandPart>
        <name>a 2'-deoxyribose 5'-monophosphate residue</name>
        <dbReference type="ChEBI" id="CHEBI:139095"/>
    </ligandPart>
</feature>
<feature type="binding site" evidence="12 14 21 22">
    <location>
        <position position="213"/>
    </location>
    <ligand>
        <name>uracil</name>
        <dbReference type="ChEBI" id="CHEBI:17568"/>
    </ligand>
</feature>
<feature type="binding site" evidence="12 22">
    <location>
        <position position="256"/>
    </location>
    <ligand>
        <name>dsDNA</name>
        <dbReference type="ChEBI" id="CHEBI:4705"/>
    </ligand>
    <ligandPart>
        <name>a 2'-deoxyribose 5'-monophosphate residue</name>
        <dbReference type="ChEBI" id="CHEBI:139095"/>
    </ligandPart>
</feature>
<feature type="binding site" evidence="12 22">
    <location>
        <position position="277"/>
    </location>
    <ligand>
        <name>dsDNA</name>
        <dbReference type="ChEBI" id="CHEBI:4705"/>
    </ligand>
    <ligandPart>
        <name>a 2'-deoxyribose 5'-monophosphate residue</name>
        <dbReference type="ChEBI" id="CHEBI:139095"/>
    </ligandPart>
</feature>
<feature type="binding site" evidence="12 14 21 22">
    <location>
        <position position="277"/>
    </location>
    <ligand>
        <name>uracil</name>
        <dbReference type="ChEBI" id="CHEBI:17568"/>
    </ligand>
</feature>
<feature type="binding site" evidence="12 22">
    <location>
        <position position="279"/>
    </location>
    <ligand>
        <name>dsDNA</name>
        <dbReference type="ChEBI" id="CHEBI:4705"/>
    </ligand>
    <ligandPart>
        <name>a 2'-deoxyribose 5'-monophosphate residue</name>
        <dbReference type="ChEBI" id="CHEBI:139095"/>
    </ligandPart>
</feature>
<feature type="binding site" evidence="12 22">
    <location>
        <position position="282"/>
    </location>
    <ligand>
        <name>dsDNA</name>
        <dbReference type="ChEBI" id="CHEBI:4705"/>
    </ligand>
    <ligandPart>
        <name>a 2'-deoxyribose 5'-monophosphate residue</name>
        <dbReference type="ChEBI" id="CHEBI:139095"/>
    </ligandPart>
</feature>
<feature type="binding site" evidence="12 22">
    <location>
        <position position="285"/>
    </location>
    <ligand>
        <name>dsDNA</name>
        <dbReference type="ChEBI" id="CHEBI:4705"/>
    </ligand>
    <ligandPart>
        <name>a 2'-deoxyribose 5'-monophosphate residue</name>
        <dbReference type="ChEBI" id="CHEBI:139095"/>
    </ligandPart>
</feature>
<feature type="site" description="Essential for recruitment to S-phase replication foci" evidence="8">
    <location>
        <position position="10"/>
    </location>
</feature>
<feature type="site" description="Essential for recruitment to S-phase replication foci" evidence="8">
    <location>
        <position position="11"/>
    </location>
</feature>
<feature type="site" description="Essential for recruitment to stalled replication forks" evidence="8">
    <location>
        <position position="77"/>
    </location>
</feature>
<feature type="site" description="Essential for recruitment to stalled replication forks" evidence="8">
    <location>
        <position position="84"/>
    </location>
</feature>
<feature type="site" description="Essential for UNG2 recruitment to nuclear foci" evidence="8">
    <location>
        <position position="88"/>
    </location>
</feature>
<feature type="modified residue" description="Phosphoserine" evidence="23 26 28">
    <location>
        <position position="12"/>
    </location>
</feature>
<feature type="modified residue" description="Phosphoserine" evidence="23 25 26 28">
    <location>
        <position position="14"/>
    </location>
</feature>
<feature type="modified residue" description="Phosphoserine" evidence="23 25 26 27 28">
    <location>
        <position position="23"/>
    </location>
</feature>
<feature type="modified residue" description="Phosphothreonine" evidence="23 25 26 27 28">
    <location>
        <position position="60"/>
    </location>
</feature>
<feature type="modified residue" description="Phosphoserine" evidence="23 25 28">
    <location>
        <position position="64"/>
    </location>
</feature>
<feature type="modified residue" description="N6-acetyllysine" evidence="24">
    <location>
        <position position="295"/>
    </location>
</feature>
<feature type="splice variant" id="VSP_008513" description="In isoform 1." evidence="17 18 19">
    <original>MIGQKTLYSFFSPSPARKRHAPSPEPAVQGTGVAGVPEESGDAA</original>
    <variation>MGVFCLGPWGLGRKLRTPGKGPLQLLSRLCGDHLQ</variation>
    <location>
        <begin position="1"/>
        <end position="44"/>
    </location>
</feature>
<feature type="sequence variant" id="VAR_052697" description="In dbSNP:rs7488798.">
    <original>Q</original>
    <variation>R</variation>
    <location>
        <position position="4"/>
    </location>
</feature>
<feature type="sequence variant" id="VAR_090201" description="In HIGM5; loss of interaction with RPA2 resulting in impaired colocalization of UNG2 and RPA2 at nuclear foci; no effect on interaction with PCNA; no effect on protein expression and stability; confers resistance to activity reduction by RPA trimer; dbSNP:rs151095402." evidence="8">
    <original>R</original>
    <variation>C</variation>
    <location>
        <position position="88"/>
    </location>
</feature>
<feature type="sequence variant" id="VAR_017094" description="In HIGM5; fully active and stable when expressed in E.coli; mistargeted to mitochondria rather than the nucleus; dbSNP:rs104894380." evidence="4 5">
    <original>F</original>
    <variation>S</variation>
    <location>
        <position position="251"/>
    </location>
</feature>
<feature type="mutagenesis site" description="Loss of interaction with PCNA; when associated with A-11. Loss of interaction with PCNA and RPA2; when associated with A-11, D-77 and D-84." evidence="8">
    <original>F</original>
    <variation>A</variation>
    <location>
        <position position="10"/>
    </location>
</feature>
<feature type="mutagenesis site" description="Loss of interaction with PCNA; when associated with A-10. Loss of interaction with PCNA and RPA2; when associated with A-10, D-77 and D-84." evidence="8">
    <original>F</original>
    <variation>A</variation>
    <location>
        <position position="11"/>
    </location>
</feature>
<feature type="mutagenesis site" description="Impairs nuclear sorting." evidence="15">
    <original>K</original>
    <variation>N</variation>
    <location>
        <position position="18"/>
    </location>
</feature>
<feature type="mutagenesis site" description="Impairs nuclear sorting." evidence="15">
    <original>R</original>
    <variation>N</variation>
    <variation>G</variation>
    <location>
        <position position="19"/>
    </location>
</feature>
<feature type="mutagenesis site" description="Decreases nuclear sorting; when associated with N-50 or E-50." evidence="15">
    <original>K</original>
    <variation>N</variation>
    <variation>E</variation>
    <location>
        <position position="49"/>
    </location>
</feature>
<feature type="mutagenesis site" description="Decreases nuclear sorting; when associated with N-49 or E-49." evidence="15">
    <original>K</original>
    <variation>N</variation>
    <variation>E</variation>
    <location>
        <position position="50"/>
    </location>
</feature>
<feature type="mutagenesis site" description="Impairs the interaction with RPA2." evidence="8">
    <original>R</original>
    <variation>D</variation>
    <location>
        <position position="73"/>
    </location>
</feature>
<feature type="mutagenesis site" description="Impairs the interaction with RPA2." evidence="8">
    <original>R</original>
    <variation>D</variation>
    <location>
        <position position="76"/>
    </location>
</feature>
<feature type="mutagenesis site" description="Impairs the interaction with RPA2. Loss of interaction with PCNA and RPA2; when associated with A-10, A-11 and D-84." evidence="8">
    <original>N</original>
    <variation>D</variation>
    <location>
        <position position="77"/>
    </location>
</feature>
<feature type="mutagenesis site" description="Impairs the interaction with RPA2." evidence="8">
    <original>K</original>
    <variation>D</variation>
    <location>
        <position position="78"/>
    </location>
</feature>
<feature type="mutagenesis site" description="Impairs the interaction with RPA2. Loss of interaction with PCNA and RPA2; when associated with A-10, A-11 and D-77." evidence="8">
    <original>R</original>
    <variation>D</variation>
    <location>
        <position position="84"/>
    </location>
</feature>
<feature type="mutagenesis site" description="Impairs the interaction with RPA2." evidence="8">
    <original>R</original>
    <variation>D</variation>
    <location>
        <position position="88"/>
    </location>
</feature>
<feature type="mutagenesis site" description="Loss of uracil-DNA glycosylase activity." evidence="11 12">
    <original>D</original>
    <variation>E</variation>
    <variation>N</variation>
    <location>
        <position position="154"/>
    </location>
</feature>
<feature type="mutagenesis site" description="Acquires thymine-DNA glycosylase activity." evidence="11">
    <original>Y</original>
    <variation>A</variation>
    <variation>C</variation>
    <variation>S</variation>
    <location>
        <position position="156"/>
    </location>
</feature>
<feature type="mutagenesis site" description="Acquires cytosine-DNA glycosylase activity." evidence="11">
    <original>N</original>
    <variation>D</variation>
    <location>
        <position position="213"/>
    </location>
</feature>
<feature type="mutagenesis site" description="Markedly decreases uracil-DNA glycosylase activity. Decreases the affinity for dUMP-carrying ssDNA and dsDNA. Loss of uracil-DNA glycosylase activity; when associated with N-154." evidence="9 12">
    <original>L</original>
    <variation>A</variation>
    <location>
        <position position="281"/>
    </location>
</feature>
<feature type="mutagenesis site" description="Decreases uracil DNA glycosylase activity. Increases the affinity for dUMP-carrying ssDNA and dsDNA." evidence="12">
    <original>L</original>
    <variation>R</variation>
    <location>
        <position position="281"/>
    </location>
</feature>
<feature type="helix" evidence="29">
    <location>
        <begin position="77"/>
        <end position="86"/>
    </location>
</feature>
<feature type="helix" evidence="31">
    <location>
        <begin position="96"/>
        <end position="102"/>
    </location>
</feature>
<feature type="helix" evidence="31">
    <location>
        <begin position="103"/>
        <end position="105"/>
    </location>
</feature>
<feature type="helix" evidence="31">
    <location>
        <begin position="109"/>
        <end position="124"/>
    </location>
</feature>
<feature type="strand" evidence="31">
    <location>
        <begin position="127"/>
        <end position="129"/>
    </location>
</feature>
<feature type="helix" evidence="31">
    <location>
        <begin position="131"/>
        <end position="133"/>
    </location>
</feature>
<feature type="helix" evidence="31">
    <location>
        <begin position="136"/>
        <end position="138"/>
    </location>
</feature>
<feature type="strand" evidence="30">
    <location>
        <begin position="139"/>
        <end position="141"/>
    </location>
</feature>
<feature type="helix" evidence="31">
    <location>
        <begin position="143"/>
        <end position="145"/>
    </location>
</feature>
<feature type="strand" evidence="31">
    <location>
        <begin position="148"/>
        <end position="152"/>
    </location>
</feature>
<feature type="turn" evidence="31">
    <location>
        <begin position="159"/>
        <end position="161"/>
    </location>
</feature>
<feature type="strand" evidence="32">
    <location>
        <begin position="163"/>
        <end position="165"/>
    </location>
</feature>
<feature type="helix" evidence="31">
    <location>
        <begin position="177"/>
        <end position="189"/>
    </location>
</feature>
<feature type="turn" evidence="33">
    <location>
        <begin position="190"/>
        <end position="192"/>
    </location>
</feature>
<feature type="helix" evidence="31">
    <location>
        <begin position="202"/>
        <end position="205"/>
    </location>
</feature>
<feature type="turn" evidence="31">
    <location>
        <begin position="206"/>
        <end position="208"/>
    </location>
</feature>
<feature type="strand" evidence="31">
    <location>
        <begin position="209"/>
        <end position="215"/>
    </location>
</feature>
<feature type="turn" evidence="31">
    <location>
        <begin position="223"/>
        <end position="228"/>
    </location>
</feature>
<feature type="helix" evidence="31">
    <location>
        <begin position="231"/>
        <end position="245"/>
    </location>
</feature>
<feature type="strand" evidence="31">
    <location>
        <begin position="250"/>
        <end position="255"/>
    </location>
</feature>
<feature type="helix" evidence="31">
    <location>
        <begin position="256"/>
        <end position="261"/>
    </location>
</feature>
<feature type="turn" evidence="31">
    <location>
        <begin position="262"/>
        <end position="264"/>
    </location>
</feature>
<feature type="turn" evidence="31">
    <location>
        <begin position="267"/>
        <end position="269"/>
    </location>
</feature>
<feature type="strand" evidence="31">
    <location>
        <begin position="270"/>
        <end position="275"/>
    </location>
</feature>
<feature type="turn" evidence="31">
    <location>
        <begin position="280"/>
        <end position="282"/>
    </location>
</feature>
<feature type="helix" evidence="31">
    <location>
        <begin position="283"/>
        <end position="285"/>
    </location>
</feature>
<feature type="turn" evidence="31">
    <location>
        <begin position="286"/>
        <end position="289"/>
    </location>
</feature>
<feature type="helix" evidence="31">
    <location>
        <begin position="292"/>
        <end position="302"/>
    </location>
</feature>
<feature type="turn" evidence="34">
    <location>
        <begin position="310"/>
        <end position="313"/>
    </location>
</feature>
<feature type="region of interest" description="Mitochondrial localization signal" evidence="15">
    <location sequence="P13051-2">
        <begin position="1"/>
        <end position="29"/>
    </location>
</feature>
<feature type="site" description="Cleavage" evidence="16">
    <location sequence="P13051-2">
        <begin position="29"/>
        <end position="30"/>
    </location>
</feature>
<feature type="site" description="Cleavage" evidence="16">
    <location sequence="P13051-2">
        <begin position="77"/>
        <end position="78"/>
    </location>
</feature>
<feature type="mutagenesis site" description="Markedly decreases mitochondrial sorting; when associated with T-14." evidence="15">
    <original>R</original>
    <variation>G</variation>
    <location sequence="P13051-2">
        <position position="13"/>
    </location>
</feature>
<feature type="mutagenesis site" description="Markedly decreases mitochondrial sorting; when associated with G-13." evidence="15">
    <original>K</original>
    <variation>T</variation>
    <location sequence="P13051-2">
        <position position="14"/>
    </location>
</feature>
<feature type="mutagenesis site" description="Decreases mitochondrial sorting; when associated with G-27, G-28 and V-29." evidence="15">
    <original>L</original>
    <variation>V</variation>
    <location sequence="P13051-2">
        <position position="26"/>
    </location>
</feature>
<feature type="mutagenesis site" description="Decreases mitochondrial sorting; when associated with V-26, G-28 and V-29." evidence="15">
    <original>S</original>
    <variation>G</variation>
    <location sequence="P13051-2">
        <position position="27"/>
    </location>
</feature>
<feature type="mutagenesis site" description="Decreases mitochondrial sorting; when associated with V-26, G-27 and V-29." evidence="15">
    <original>R</original>
    <variation>G</variation>
    <location sequence="P13051-2">
        <position position="28"/>
    </location>
</feature>
<feature type="mutagenesis site" description="Decreases mitochondrial sorting; when associated with V-26, G-27 and G-28." evidence="15">
    <original>L</original>
    <variation>V</variation>
    <location sequence="P13051-2">
        <position position="29"/>
    </location>
</feature>
<gene>
    <name evidence="2" type="primary">UNG</name>
    <name type="synonym">DGU</name>
    <name evidence="2" type="synonym">UNG1</name>
    <name evidence="2" type="synonym">UNG15</name>
</gene>
<organism>
    <name type="scientific">Homo sapiens</name>
    <name type="common">Human</name>
    <dbReference type="NCBI Taxonomy" id="9606"/>
    <lineage>
        <taxon>Eukaryota</taxon>
        <taxon>Metazoa</taxon>
        <taxon>Chordata</taxon>
        <taxon>Craniata</taxon>
        <taxon>Vertebrata</taxon>
        <taxon>Euteleostomi</taxon>
        <taxon>Mammalia</taxon>
        <taxon>Eutheria</taxon>
        <taxon>Euarchontoglires</taxon>
        <taxon>Primates</taxon>
        <taxon>Haplorrhini</taxon>
        <taxon>Catarrhini</taxon>
        <taxon>Hominidae</taxon>
        <taxon>Homo</taxon>
    </lineage>
</organism>